<name>Y3603_PARC0</name>
<dbReference type="EMBL" id="CP000512">
    <property type="protein sequence ID" value="ABM34154.1"/>
    <property type="molecule type" value="Genomic_DNA"/>
</dbReference>
<dbReference type="RefSeq" id="WP_011796651.1">
    <property type="nucleotide sequence ID" value="NC_008752.1"/>
</dbReference>
<dbReference type="SMR" id="A1TT66"/>
<dbReference type="STRING" id="397945.Aave_3603"/>
<dbReference type="GeneID" id="79791507"/>
<dbReference type="KEGG" id="aav:Aave_3603"/>
<dbReference type="eggNOG" id="COG1660">
    <property type="taxonomic scope" value="Bacteria"/>
</dbReference>
<dbReference type="HOGENOM" id="CLU_059558_1_1_4"/>
<dbReference type="OrthoDB" id="9784461at2"/>
<dbReference type="Proteomes" id="UP000002596">
    <property type="component" value="Chromosome"/>
</dbReference>
<dbReference type="GO" id="GO:0005524">
    <property type="term" value="F:ATP binding"/>
    <property type="evidence" value="ECO:0007669"/>
    <property type="project" value="UniProtKB-UniRule"/>
</dbReference>
<dbReference type="GO" id="GO:0005525">
    <property type="term" value="F:GTP binding"/>
    <property type="evidence" value="ECO:0007669"/>
    <property type="project" value="UniProtKB-UniRule"/>
</dbReference>
<dbReference type="Gene3D" id="3.40.50.300">
    <property type="entry name" value="P-loop containing nucleotide triphosphate hydrolases"/>
    <property type="match status" value="1"/>
</dbReference>
<dbReference type="HAMAP" id="MF_00636">
    <property type="entry name" value="RapZ_like"/>
    <property type="match status" value="1"/>
</dbReference>
<dbReference type="InterPro" id="IPR027417">
    <property type="entry name" value="P-loop_NTPase"/>
</dbReference>
<dbReference type="InterPro" id="IPR005337">
    <property type="entry name" value="RapZ-like"/>
</dbReference>
<dbReference type="InterPro" id="IPR053930">
    <property type="entry name" value="RapZ-like_N"/>
</dbReference>
<dbReference type="InterPro" id="IPR053931">
    <property type="entry name" value="RapZ_C"/>
</dbReference>
<dbReference type="NCBIfam" id="NF003828">
    <property type="entry name" value="PRK05416.1"/>
    <property type="match status" value="1"/>
</dbReference>
<dbReference type="PANTHER" id="PTHR30448">
    <property type="entry name" value="RNASE ADAPTER PROTEIN RAPZ"/>
    <property type="match status" value="1"/>
</dbReference>
<dbReference type="PANTHER" id="PTHR30448:SF0">
    <property type="entry name" value="RNASE ADAPTER PROTEIN RAPZ"/>
    <property type="match status" value="1"/>
</dbReference>
<dbReference type="Pfam" id="PF22740">
    <property type="entry name" value="PapZ_C"/>
    <property type="match status" value="1"/>
</dbReference>
<dbReference type="Pfam" id="PF03668">
    <property type="entry name" value="RapZ-like_N"/>
    <property type="match status" value="1"/>
</dbReference>
<dbReference type="PIRSF" id="PIRSF005052">
    <property type="entry name" value="P-loopkin"/>
    <property type="match status" value="1"/>
</dbReference>
<dbReference type="SUPFAM" id="SSF52540">
    <property type="entry name" value="P-loop containing nucleoside triphosphate hydrolases"/>
    <property type="match status" value="1"/>
</dbReference>
<evidence type="ECO:0000255" key="1">
    <source>
        <dbReference type="HAMAP-Rule" id="MF_00636"/>
    </source>
</evidence>
<sequence>MMADTLEIVLITGMSGSGKSVALHALEDAGYYCVDNLPPELLAAFVALEHQHHGNRVAIAMDVRSATALPLVPQQLRRLRGEGVTVHSLFLDATTDTLVRRFSETRRRHPLSRDEWYGEPHALLETLELERELLADLREQSHVIDTSAIRAAQLQGYVKSLMPALPGQLTLVFQSFAFKRGVPVDADYVFDVRMLPNPHYEPGLRNLTGKDQPVVHYLEQAREVRQMREHITHFLGHWLEPLAQNHRSYVTVAIGCTGGQHRSVYLVEQLAAEFSDRWTTLRRHRELDGR</sequence>
<protein>
    <recommendedName>
        <fullName evidence="1">Nucleotide-binding protein Aave_3603</fullName>
    </recommendedName>
</protein>
<accession>A1TT66</accession>
<feature type="chain" id="PRO_0000383207" description="Nucleotide-binding protein Aave_3603">
    <location>
        <begin position="1"/>
        <end position="290"/>
    </location>
</feature>
<feature type="binding site" evidence="1">
    <location>
        <begin position="13"/>
        <end position="20"/>
    </location>
    <ligand>
        <name>ATP</name>
        <dbReference type="ChEBI" id="CHEBI:30616"/>
    </ligand>
</feature>
<feature type="binding site" evidence="1">
    <location>
        <begin position="62"/>
        <end position="65"/>
    </location>
    <ligand>
        <name>GTP</name>
        <dbReference type="ChEBI" id="CHEBI:37565"/>
    </ligand>
</feature>
<keyword id="KW-0067">ATP-binding</keyword>
<keyword id="KW-0342">GTP-binding</keyword>
<keyword id="KW-0547">Nucleotide-binding</keyword>
<organism>
    <name type="scientific">Paracidovorax citrulli (strain AAC00-1)</name>
    <name type="common">Acidovorax citrulli</name>
    <dbReference type="NCBI Taxonomy" id="397945"/>
    <lineage>
        <taxon>Bacteria</taxon>
        <taxon>Pseudomonadati</taxon>
        <taxon>Pseudomonadota</taxon>
        <taxon>Betaproteobacteria</taxon>
        <taxon>Burkholderiales</taxon>
        <taxon>Comamonadaceae</taxon>
        <taxon>Paracidovorax</taxon>
    </lineage>
</organism>
<gene>
    <name type="ordered locus">Aave_3603</name>
</gene>
<reference key="1">
    <citation type="submission" date="2006-12" db="EMBL/GenBank/DDBJ databases">
        <title>Complete sequence of Acidovorax avenae subsp. citrulli AAC00-1.</title>
        <authorList>
            <person name="Copeland A."/>
            <person name="Lucas S."/>
            <person name="Lapidus A."/>
            <person name="Barry K."/>
            <person name="Detter J.C."/>
            <person name="Glavina del Rio T."/>
            <person name="Dalin E."/>
            <person name="Tice H."/>
            <person name="Pitluck S."/>
            <person name="Kiss H."/>
            <person name="Brettin T."/>
            <person name="Bruce D."/>
            <person name="Han C."/>
            <person name="Tapia R."/>
            <person name="Gilna P."/>
            <person name="Schmutz J."/>
            <person name="Larimer F."/>
            <person name="Land M."/>
            <person name="Hauser L."/>
            <person name="Kyrpides N."/>
            <person name="Kim E."/>
            <person name="Stahl D."/>
            <person name="Richardson P."/>
        </authorList>
    </citation>
    <scope>NUCLEOTIDE SEQUENCE [LARGE SCALE GENOMIC DNA]</scope>
    <source>
        <strain>AAC00-1</strain>
    </source>
</reference>
<comment type="function">
    <text evidence="1">Displays ATPase and GTPase activities.</text>
</comment>
<comment type="similarity">
    <text evidence="1">Belongs to the RapZ-like family.</text>
</comment>
<proteinExistence type="inferred from homology"/>